<sequence>MARNRLTESEMNEALRALDGWQKVDGREAITRSFKFKDFSTAFGFMAQAALYAEKLDHHPEWFNAYNRVDVTLATHSENGVTELDIKMARKMNAIAG</sequence>
<gene>
    <name type="ordered locus">BCAN_A0083</name>
</gene>
<dbReference type="EC" id="4.2.1.96" evidence="1"/>
<dbReference type="EMBL" id="CP000872">
    <property type="protein sequence ID" value="ABX61185.1"/>
    <property type="molecule type" value="Genomic_DNA"/>
</dbReference>
<dbReference type="RefSeq" id="WP_002965330.1">
    <property type="nucleotide sequence ID" value="NC_010103.1"/>
</dbReference>
<dbReference type="SMR" id="A9M6T4"/>
<dbReference type="KEGG" id="bcs:BCAN_A0083"/>
<dbReference type="HOGENOM" id="CLU_081974_3_2_5"/>
<dbReference type="Proteomes" id="UP000001385">
    <property type="component" value="Chromosome I"/>
</dbReference>
<dbReference type="GO" id="GO:0008124">
    <property type="term" value="F:4-alpha-hydroxytetrahydrobiopterin dehydratase activity"/>
    <property type="evidence" value="ECO:0007669"/>
    <property type="project" value="UniProtKB-UniRule"/>
</dbReference>
<dbReference type="GO" id="GO:0006729">
    <property type="term" value="P:tetrahydrobiopterin biosynthetic process"/>
    <property type="evidence" value="ECO:0007669"/>
    <property type="project" value="InterPro"/>
</dbReference>
<dbReference type="CDD" id="cd00914">
    <property type="entry name" value="PCD_DCoH_subfamily_b"/>
    <property type="match status" value="1"/>
</dbReference>
<dbReference type="Gene3D" id="3.30.1360.20">
    <property type="entry name" value="Transcriptional coactivator/pterin dehydratase"/>
    <property type="match status" value="1"/>
</dbReference>
<dbReference type="HAMAP" id="MF_00434">
    <property type="entry name" value="Pterin_4_alpha"/>
    <property type="match status" value="1"/>
</dbReference>
<dbReference type="InterPro" id="IPR036428">
    <property type="entry name" value="PCD_sf"/>
</dbReference>
<dbReference type="InterPro" id="IPR001533">
    <property type="entry name" value="Pterin_deHydtase"/>
</dbReference>
<dbReference type="NCBIfam" id="NF002017">
    <property type="entry name" value="PRK00823.1-2"/>
    <property type="match status" value="1"/>
</dbReference>
<dbReference type="NCBIfam" id="NF002018">
    <property type="entry name" value="PRK00823.1-3"/>
    <property type="match status" value="1"/>
</dbReference>
<dbReference type="PANTHER" id="PTHR12599">
    <property type="entry name" value="PTERIN-4-ALPHA-CARBINOLAMINE DEHYDRATASE"/>
    <property type="match status" value="1"/>
</dbReference>
<dbReference type="PANTHER" id="PTHR12599:SF0">
    <property type="entry name" value="PTERIN-4-ALPHA-CARBINOLAMINE DEHYDRATASE"/>
    <property type="match status" value="1"/>
</dbReference>
<dbReference type="Pfam" id="PF01329">
    <property type="entry name" value="Pterin_4a"/>
    <property type="match status" value="1"/>
</dbReference>
<dbReference type="SUPFAM" id="SSF55248">
    <property type="entry name" value="PCD-like"/>
    <property type="match status" value="1"/>
</dbReference>
<accession>A9M6T4</accession>
<reference key="1">
    <citation type="submission" date="2007-10" db="EMBL/GenBank/DDBJ databases">
        <title>Brucella canis ATCC 23365 whole genome shotgun sequencing project.</title>
        <authorList>
            <person name="Setubal J.C."/>
            <person name="Bowns C."/>
            <person name="Boyle S."/>
            <person name="Crasta O.R."/>
            <person name="Czar M.J."/>
            <person name="Dharmanolla C."/>
            <person name="Gillespie J.J."/>
            <person name="Kenyon R.W."/>
            <person name="Lu J."/>
            <person name="Mane S."/>
            <person name="Mohapatra S."/>
            <person name="Nagrani S."/>
            <person name="Purkayastha A."/>
            <person name="Rajasimha H.K."/>
            <person name="Shallom J.M."/>
            <person name="Shallom S."/>
            <person name="Shukla M."/>
            <person name="Snyder E.E."/>
            <person name="Sobral B.W."/>
            <person name="Wattam A.R."/>
            <person name="Will R."/>
            <person name="Williams K."/>
            <person name="Yoo H."/>
            <person name="Bruce D."/>
            <person name="Detter C."/>
            <person name="Munk C."/>
            <person name="Brettin T.S."/>
        </authorList>
    </citation>
    <scope>NUCLEOTIDE SEQUENCE [LARGE SCALE GENOMIC DNA]</scope>
    <source>
        <strain>ATCC 23365 / NCTC 10854 / RM-666</strain>
    </source>
</reference>
<organism>
    <name type="scientific">Brucella canis (strain ATCC 23365 / NCTC 10854 / RM-666)</name>
    <dbReference type="NCBI Taxonomy" id="483179"/>
    <lineage>
        <taxon>Bacteria</taxon>
        <taxon>Pseudomonadati</taxon>
        <taxon>Pseudomonadota</taxon>
        <taxon>Alphaproteobacteria</taxon>
        <taxon>Hyphomicrobiales</taxon>
        <taxon>Brucellaceae</taxon>
        <taxon>Brucella/Ochrobactrum group</taxon>
        <taxon>Brucella</taxon>
    </lineage>
</organism>
<keyword id="KW-0456">Lyase</keyword>
<keyword id="KW-1185">Reference proteome</keyword>
<feature type="chain" id="PRO_1000080604" description="Putative pterin-4-alpha-carbinolamine dehydratase">
    <location>
        <begin position="1"/>
        <end position="97"/>
    </location>
</feature>
<evidence type="ECO:0000255" key="1">
    <source>
        <dbReference type="HAMAP-Rule" id="MF_00434"/>
    </source>
</evidence>
<protein>
    <recommendedName>
        <fullName evidence="1">Putative pterin-4-alpha-carbinolamine dehydratase</fullName>
        <shortName evidence="1">PHS</shortName>
        <ecNumber evidence="1">4.2.1.96</ecNumber>
    </recommendedName>
    <alternativeName>
        <fullName evidence="1">4-alpha-hydroxy-tetrahydropterin dehydratase</fullName>
    </alternativeName>
    <alternativeName>
        <fullName evidence="1">Pterin carbinolamine dehydratase</fullName>
        <shortName evidence="1">PCD</shortName>
    </alternativeName>
</protein>
<proteinExistence type="inferred from homology"/>
<comment type="catalytic activity">
    <reaction evidence="1">
        <text>(4aS,6R)-4a-hydroxy-L-erythro-5,6,7,8-tetrahydrobiopterin = (6R)-L-erythro-6,7-dihydrobiopterin + H2O</text>
        <dbReference type="Rhea" id="RHEA:11920"/>
        <dbReference type="ChEBI" id="CHEBI:15377"/>
        <dbReference type="ChEBI" id="CHEBI:15642"/>
        <dbReference type="ChEBI" id="CHEBI:43120"/>
        <dbReference type="EC" id="4.2.1.96"/>
    </reaction>
</comment>
<comment type="similarity">
    <text evidence="1">Belongs to the pterin-4-alpha-carbinolamine dehydratase family.</text>
</comment>
<name>PHS_BRUC2</name>